<protein>
    <recommendedName>
        <fullName evidence="1">Enolase-phosphatase E1</fullName>
        <ecNumber evidence="1">3.1.3.77</ecNumber>
    </recommendedName>
    <alternativeName>
        <fullName evidence="1">2,3-diketo-5-methylthio-1-phosphopentane phosphatase</fullName>
    </alternativeName>
</protein>
<sequence>MEAKPRVKVVLLDIEGTVCPISFVKDVLFPYALAALPETLSTEWDSSSFLPYRSAFPPEHSSTPEALLSHVRDLMAQDLKIPYLKSLQGYLWLRGYESGTLKCPLFPDVYPAMKKWKENGAKICIYSSGSVAAQKLLWRYTAEGDLRGCIWNGVDGAEEIEGGYWDTVNAGLKQESTSYEKIAKANRALGEVGEWLFLSDNVKEVRAAKESGMKSFVVVREGNADVSVEEKNRQVLITSFREVEAMVEVTGESA</sequence>
<keyword id="KW-0028">Amino-acid biosynthesis</keyword>
<keyword id="KW-0963">Cytoplasm</keyword>
<keyword id="KW-0378">Hydrolase</keyword>
<keyword id="KW-0460">Magnesium</keyword>
<keyword id="KW-0479">Metal-binding</keyword>
<keyword id="KW-0486">Methionine biosynthesis</keyword>
<keyword id="KW-0539">Nucleus</keyword>
<keyword id="KW-1185">Reference proteome</keyword>
<name>ENOPH_SCLS1</name>
<comment type="function">
    <text evidence="1">Bifunctional enzyme that catalyzes the enolization of 2,3-diketo-5-methylthiopentyl-1-phosphate (DK-MTP-1-P) into the intermediate 2-hydroxy-3-keto-5-methylthiopentenyl-1-phosphate (HK-MTPenyl-1-P), which is then dephosphorylated to form the acireductone 1,2-dihydroxy-3-keto-5-methylthiopentene (DHK-MTPene).</text>
</comment>
<comment type="catalytic activity">
    <reaction evidence="1">
        <text>5-methylsulfanyl-2,3-dioxopentyl phosphate + H2O = 1,2-dihydroxy-5-(methylsulfanyl)pent-1-en-3-one + phosphate</text>
        <dbReference type="Rhea" id="RHEA:21700"/>
        <dbReference type="ChEBI" id="CHEBI:15377"/>
        <dbReference type="ChEBI" id="CHEBI:43474"/>
        <dbReference type="ChEBI" id="CHEBI:49252"/>
        <dbReference type="ChEBI" id="CHEBI:58828"/>
        <dbReference type="EC" id="3.1.3.77"/>
    </reaction>
</comment>
<comment type="cofactor">
    <cofactor evidence="1">
        <name>Mg(2+)</name>
        <dbReference type="ChEBI" id="CHEBI:18420"/>
    </cofactor>
    <text evidence="1">Binds 1 Mg(2+) ion per subunit.</text>
</comment>
<comment type="pathway">
    <text evidence="1">Amino-acid biosynthesis; L-methionine biosynthesis via salvage pathway; L-methionine from S-methyl-5-thio-alpha-D-ribose 1-phosphate: step 3/6.</text>
</comment>
<comment type="pathway">
    <text evidence="1">Amino-acid biosynthesis; L-methionine biosynthesis via salvage pathway; L-methionine from S-methyl-5-thio-alpha-D-ribose 1-phosphate: step 4/6.</text>
</comment>
<comment type="subunit">
    <text evidence="1">Monomer.</text>
</comment>
<comment type="subcellular location">
    <subcellularLocation>
        <location evidence="1">Cytoplasm</location>
    </subcellularLocation>
    <subcellularLocation>
        <location evidence="1">Nucleus</location>
    </subcellularLocation>
</comment>
<comment type="similarity">
    <text evidence="1">Belongs to the HAD-like hydrolase superfamily. MasA/MtnC family.</text>
</comment>
<comment type="sequence caution" evidence="2">
    <conflict type="erroneous gene model prediction">
        <sequence resource="EMBL-CDS" id="EDN90616"/>
    </conflict>
</comment>
<feature type="chain" id="PRO_0000394012" description="Enolase-phosphatase E1">
    <location>
        <begin position="1"/>
        <end position="254"/>
    </location>
</feature>
<feature type="binding site" evidence="1">
    <location>
        <position position="13"/>
    </location>
    <ligand>
        <name>Mg(2+)</name>
        <dbReference type="ChEBI" id="CHEBI:18420"/>
    </ligand>
</feature>
<feature type="binding site" evidence="1">
    <location>
        <position position="15"/>
    </location>
    <ligand>
        <name>Mg(2+)</name>
        <dbReference type="ChEBI" id="CHEBI:18420"/>
    </ligand>
</feature>
<feature type="binding site" evidence="1">
    <location>
        <begin position="127"/>
        <end position="128"/>
    </location>
    <ligand>
        <name>substrate</name>
    </ligand>
</feature>
<feature type="binding site" evidence="1">
    <location>
        <position position="173"/>
    </location>
    <ligand>
        <name>substrate</name>
    </ligand>
</feature>
<feature type="binding site" evidence="1">
    <location>
        <position position="200"/>
    </location>
    <ligand>
        <name>Mg(2+)</name>
        <dbReference type="ChEBI" id="CHEBI:18420"/>
    </ligand>
</feature>
<dbReference type="EC" id="3.1.3.77" evidence="1"/>
<dbReference type="EMBL" id="CH476621">
    <property type="protein sequence ID" value="EDN90616.1"/>
    <property type="status" value="ALT_SEQ"/>
    <property type="molecule type" value="Genomic_DNA"/>
</dbReference>
<dbReference type="RefSeq" id="XP_001597930.1">
    <property type="nucleotide sequence ID" value="XM_001597880.1"/>
</dbReference>
<dbReference type="SMR" id="A7E3Z4"/>
<dbReference type="FunCoup" id="A7E3Z4">
    <property type="interactions" value="608"/>
</dbReference>
<dbReference type="STRING" id="665079.A7E3Z4"/>
<dbReference type="GeneID" id="5494348"/>
<dbReference type="KEGG" id="ssl:SS1G_00016"/>
<dbReference type="VEuPathDB" id="FungiDB:sscle_03g030320"/>
<dbReference type="eggNOG" id="KOG2630">
    <property type="taxonomic scope" value="Eukaryota"/>
</dbReference>
<dbReference type="InParanoid" id="A7E3Z4"/>
<dbReference type="OrthoDB" id="272500at2759"/>
<dbReference type="UniPathway" id="UPA00904">
    <property type="reaction ID" value="UER00876"/>
</dbReference>
<dbReference type="UniPathway" id="UPA00904">
    <property type="reaction ID" value="UER00877"/>
</dbReference>
<dbReference type="Proteomes" id="UP000001312">
    <property type="component" value="Unassembled WGS sequence"/>
</dbReference>
<dbReference type="GO" id="GO:0005737">
    <property type="term" value="C:cytoplasm"/>
    <property type="evidence" value="ECO:0007669"/>
    <property type="project" value="UniProtKB-SubCell"/>
</dbReference>
<dbReference type="GO" id="GO:0005634">
    <property type="term" value="C:nucleus"/>
    <property type="evidence" value="ECO:0007669"/>
    <property type="project" value="UniProtKB-SubCell"/>
</dbReference>
<dbReference type="GO" id="GO:0043874">
    <property type="term" value="F:acireductone synthase activity"/>
    <property type="evidence" value="ECO:0000318"/>
    <property type="project" value="GO_Central"/>
</dbReference>
<dbReference type="GO" id="GO:0000287">
    <property type="term" value="F:magnesium ion binding"/>
    <property type="evidence" value="ECO:0007669"/>
    <property type="project" value="UniProtKB-UniRule"/>
</dbReference>
<dbReference type="GO" id="GO:0019509">
    <property type="term" value="P:L-methionine salvage from methylthioadenosine"/>
    <property type="evidence" value="ECO:0000318"/>
    <property type="project" value="GO_Central"/>
</dbReference>
<dbReference type="CDD" id="cd01629">
    <property type="entry name" value="HAD_EP"/>
    <property type="match status" value="1"/>
</dbReference>
<dbReference type="FunFam" id="1.10.720.60:FF:000007">
    <property type="entry name" value="Enolase-phosphatase E1"/>
    <property type="match status" value="1"/>
</dbReference>
<dbReference type="FunFam" id="3.40.50.1000:FF:000079">
    <property type="entry name" value="Enolase-phosphatase E1"/>
    <property type="match status" value="1"/>
</dbReference>
<dbReference type="Gene3D" id="1.10.720.60">
    <property type="match status" value="1"/>
</dbReference>
<dbReference type="Gene3D" id="3.40.50.1000">
    <property type="entry name" value="HAD superfamily/HAD-like"/>
    <property type="match status" value="1"/>
</dbReference>
<dbReference type="HAMAP" id="MF_03117">
    <property type="entry name" value="Salvage_MtnC_euk"/>
    <property type="match status" value="1"/>
</dbReference>
<dbReference type="InterPro" id="IPR023943">
    <property type="entry name" value="Enolase-ppase_E1"/>
</dbReference>
<dbReference type="InterPro" id="IPR027511">
    <property type="entry name" value="ENOPH1_eukaryotes"/>
</dbReference>
<dbReference type="InterPro" id="IPR036412">
    <property type="entry name" value="HAD-like_sf"/>
</dbReference>
<dbReference type="InterPro" id="IPR023214">
    <property type="entry name" value="HAD_sf"/>
</dbReference>
<dbReference type="NCBIfam" id="TIGR01691">
    <property type="entry name" value="enolase-ppase"/>
    <property type="match status" value="1"/>
</dbReference>
<dbReference type="PANTHER" id="PTHR20371">
    <property type="entry name" value="ENOLASE-PHOSPHATASE E1"/>
    <property type="match status" value="1"/>
</dbReference>
<dbReference type="PANTHER" id="PTHR20371:SF1">
    <property type="entry name" value="ENOLASE-PHOSPHATASE E1"/>
    <property type="match status" value="1"/>
</dbReference>
<dbReference type="Pfam" id="PF00702">
    <property type="entry name" value="Hydrolase"/>
    <property type="match status" value="1"/>
</dbReference>
<dbReference type="SFLD" id="SFLDG01133">
    <property type="entry name" value="C1.5.4:_Enolase-phosphatase_Li"/>
    <property type="match status" value="1"/>
</dbReference>
<dbReference type="SFLD" id="SFLDS00003">
    <property type="entry name" value="Haloacid_Dehalogenase"/>
    <property type="match status" value="1"/>
</dbReference>
<dbReference type="SUPFAM" id="SSF56784">
    <property type="entry name" value="HAD-like"/>
    <property type="match status" value="1"/>
</dbReference>
<organism>
    <name type="scientific">Sclerotinia sclerotiorum (strain ATCC 18683 / 1980 / Ss-1)</name>
    <name type="common">White mold</name>
    <name type="synonym">Whetzelinia sclerotiorum</name>
    <dbReference type="NCBI Taxonomy" id="665079"/>
    <lineage>
        <taxon>Eukaryota</taxon>
        <taxon>Fungi</taxon>
        <taxon>Dikarya</taxon>
        <taxon>Ascomycota</taxon>
        <taxon>Pezizomycotina</taxon>
        <taxon>Leotiomycetes</taxon>
        <taxon>Helotiales</taxon>
        <taxon>Sclerotiniaceae</taxon>
        <taxon>Sclerotinia</taxon>
    </lineage>
</organism>
<proteinExistence type="inferred from homology"/>
<gene>
    <name type="primary">utr4</name>
    <name type="ORF">SS1G_00016</name>
</gene>
<reference key="1">
    <citation type="journal article" date="2011" name="PLoS Genet.">
        <title>Genomic analysis of the necrotrophic fungal pathogens Sclerotinia sclerotiorum and Botrytis cinerea.</title>
        <authorList>
            <person name="Amselem J."/>
            <person name="Cuomo C.A."/>
            <person name="van Kan J.A.L."/>
            <person name="Viaud M."/>
            <person name="Benito E.P."/>
            <person name="Couloux A."/>
            <person name="Coutinho P.M."/>
            <person name="de Vries R.P."/>
            <person name="Dyer P.S."/>
            <person name="Fillinger S."/>
            <person name="Fournier E."/>
            <person name="Gout L."/>
            <person name="Hahn M."/>
            <person name="Kohn L."/>
            <person name="Lapalu N."/>
            <person name="Plummer K.M."/>
            <person name="Pradier J.-M."/>
            <person name="Quevillon E."/>
            <person name="Sharon A."/>
            <person name="Simon A."/>
            <person name="ten Have A."/>
            <person name="Tudzynski B."/>
            <person name="Tudzynski P."/>
            <person name="Wincker P."/>
            <person name="Andrew M."/>
            <person name="Anthouard V."/>
            <person name="Beever R.E."/>
            <person name="Beffa R."/>
            <person name="Benoit I."/>
            <person name="Bouzid O."/>
            <person name="Brault B."/>
            <person name="Chen Z."/>
            <person name="Choquer M."/>
            <person name="Collemare J."/>
            <person name="Cotton P."/>
            <person name="Danchin E.G."/>
            <person name="Da Silva C."/>
            <person name="Gautier A."/>
            <person name="Giraud C."/>
            <person name="Giraud T."/>
            <person name="Gonzalez C."/>
            <person name="Grossetete S."/>
            <person name="Gueldener U."/>
            <person name="Henrissat B."/>
            <person name="Howlett B.J."/>
            <person name="Kodira C."/>
            <person name="Kretschmer M."/>
            <person name="Lappartient A."/>
            <person name="Leroch M."/>
            <person name="Levis C."/>
            <person name="Mauceli E."/>
            <person name="Neuveglise C."/>
            <person name="Oeser B."/>
            <person name="Pearson M."/>
            <person name="Poulain J."/>
            <person name="Poussereau N."/>
            <person name="Quesneville H."/>
            <person name="Rascle C."/>
            <person name="Schumacher J."/>
            <person name="Segurens B."/>
            <person name="Sexton A."/>
            <person name="Silva E."/>
            <person name="Sirven C."/>
            <person name="Soanes D.M."/>
            <person name="Talbot N.J."/>
            <person name="Templeton M."/>
            <person name="Yandava C."/>
            <person name="Yarden O."/>
            <person name="Zeng Q."/>
            <person name="Rollins J.A."/>
            <person name="Lebrun M.-H."/>
            <person name="Dickman M."/>
        </authorList>
    </citation>
    <scope>NUCLEOTIDE SEQUENCE [LARGE SCALE GENOMIC DNA]</scope>
    <source>
        <strain>ATCC 18683 / 1980 / Ss-1</strain>
    </source>
</reference>
<accession>A7E3Z4</accession>
<evidence type="ECO:0000255" key="1">
    <source>
        <dbReference type="HAMAP-Rule" id="MF_03117"/>
    </source>
</evidence>
<evidence type="ECO:0000305" key="2"/>